<feature type="chain" id="PRO_0000414804" description="23S rRNA (uracil(1939)-C(5))-methyltransferase RlmD">
    <location>
        <begin position="1"/>
        <end position="483"/>
    </location>
</feature>
<feature type="domain" description="TRAM" evidence="1">
    <location>
        <begin position="29"/>
        <end position="90"/>
    </location>
</feature>
<feature type="region of interest" description="Disordered" evidence="2">
    <location>
        <begin position="1"/>
        <end position="36"/>
    </location>
</feature>
<feature type="compositionally biased region" description="Basic residues" evidence="2">
    <location>
        <begin position="1"/>
        <end position="11"/>
    </location>
</feature>
<feature type="active site" description="Nucleophile" evidence="1">
    <location>
        <position position="427"/>
    </location>
</feature>
<feature type="binding site" evidence="1">
    <location>
        <position position="103"/>
    </location>
    <ligand>
        <name>[4Fe-4S] cluster</name>
        <dbReference type="ChEBI" id="CHEBI:49883"/>
    </ligand>
</feature>
<feature type="binding site" evidence="1">
    <location>
        <position position="109"/>
    </location>
    <ligand>
        <name>[4Fe-4S] cluster</name>
        <dbReference type="ChEBI" id="CHEBI:49883"/>
    </ligand>
</feature>
<feature type="binding site" evidence="1">
    <location>
        <position position="112"/>
    </location>
    <ligand>
        <name>[4Fe-4S] cluster</name>
        <dbReference type="ChEBI" id="CHEBI:49883"/>
    </ligand>
</feature>
<feature type="binding site" evidence="1">
    <location>
        <position position="189"/>
    </location>
    <ligand>
        <name>[4Fe-4S] cluster</name>
        <dbReference type="ChEBI" id="CHEBI:49883"/>
    </ligand>
</feature>
<feature type="binding site" evidence="1">
    <location>
        <position position="298"/>
    </location>
    <ligand>
        <name>S-adenosyl-L-methionine</name>
        <dbReference type="ChEBI" id="CHEBI:59789"/>
    </ligand>
</feature>
<feature type="binding site" evidence="1">
    <location>
        <position position="332"/>
    </location>
    <ligand>
        <name>S-adenosyl-L-methionine</name>
        <dbReference type="ChEBI" id="CHEBI:59789"/>
    </ligand>
</feature>
<feature type="binding site" evidence="1">
    <location>
        <position position="337"/>
    </location>
    <ligand>
        <name>S-adenosyl-L-methionine</name>
        <dbReference type="ChEBI" id="CHEBI:59789"/>
    </ligand>
</feature>
<feature type="binding site" evidence="1">
    <location>
        <position position="353"/>
    </location>
    <ligand>
        <name>S-adenosyl-L-methionine</name>
        <dbReference type="ChEBI" id="CHEBI:59789"/>
    </ligand>
</feature>
<feature type="binding site" evidence="1">
    <location>
        <position position="379"/>
    </location>
    <ligand>
        <name>S-adenosyl-L-methionine</name>
        <dbReference type="ChEBI" id="CHEBI:59789"/>
    </ligand>
</feature>
<feature type="binding site" evidence="1">
    <location>
        <position position="401"/>
    </location>
    <ligand>
        <name>S-adenosyl-L-methionine</name>
        <dbReference type="ChEBI" id="CHEBI:59789"/>
    </ligand>
</feature>
<sequence>MTGLGKRRPARSRSGVSGLRERRQPASVERSAGSEGRRELVIQGLAHDGRGVARDVDGKTVFVEGALPGERVQASVHRRRKRFDEAHVSEVIAASASRVAPPCRHYGSCGGCDLQHLSLEAQRDHKREVLRELLARQGIELPGASSLLADAGEGYRRRARIGVRVDSNGQVRLGFRARHSHRLVDLDDCPVLLPALSSLLRPLREQVESLEAPRHVGHLELLASDGAVTLVVRQLREHVADQRRWRAFAEAQGLHLGAWLGRESPRFEWLTPPPALHCRLTAGRRTLVLGLEPSDFLQANEAVNQRMVDTALSWLAPALSPVAPGTRVLDLFAGIGNFSLPLATQGAEVSAVEGSTAMVERLAGNAARNQVAVTARQADLNDAEACRRLLATTAPEVLVLDPPRSGAEALCRQLVEHPVPWVLYISCDPATLARDAAWLVSAGYVVRRSAVADMFAHTSHLESMLLLEHPDSARRQQGASTDG</sequence>
<reference key="1">
    <citation type="journal article" date="2011" name="Environ. Microbiol.">
        <title>A blueprint of ectoine metabolism from the genome of the industrial producer Halomonas elongata DSM 2581(T).</title>
        <authorList>
            <person name="Schwibbert K."/>
            <person name="Marin-Sanguino A."/>
            <person name="Bagyan I."/>
            <person name="Heidrich G."/>
            <person name="Lentzen G."/>
            <person name="Seitz H."/>
            <person name="Rampp M."/>
            <person name="Schuster S.C."/>
            <person name="Klenk H.P."/>
            <person name="Pfeiffer F."/>
            <person name="Oesterhelt D."/>
            <person name="Kunte H.J."/>
        </authorList>
    </citation>
    <scope>NUCLEOTIDE SEQUENCE [LARGE SCALE GENOMIC DNA]</scope>
    <source>
        <strain>ATCC 33173 / DSM 2581 / NBRC 15536 / NCIMB 2198 / 1H9</strain>
    </source>
</reference>
<keyword id="KW-0004">4Fe-4S</keyword>
<keyword id="KW-0408">Iron</keyword>
<keyword id="KW-0411">Iron-sulfur</keyword>
<keyword id="KW-0479">Metal-binding</keyword>
<keyword id="KW-0489">Methyltransferase</keyword>
<keyword id="KW-0698">rRNA processing</keyword>
<keyword id="KW-0949">S-adenosyl-L-methionine</keyword>
<keyword id="KW-0808">Transferase</keyword>
<accession>E1V4F9</accession>
<name>RLMD_HALED</name>
<organism>
    <name type="scientific">Halomonas elongata (strain ATCC 33173 / DSM 2581 / NBRC 15536 / NCIMB 2198 / 1H9)</name>
    <dbReference type="NCBI Taxonomy" id="768066"/>
    <lineage>
        <taxon>Bacteria</taxon>
        <taxon>Pseudomonadati</taxon>
        <taxon>Pseudomonadota</taxon>
        <taxon>Gammaproteobacteria</taxon>
        <taxon>Oceanospirillales</taxon>
        <taxon>Halomonadaceae</taxon>
        <taxon>Halomonas</taxon>
    </lineage>
</organism>
<comment type="function">
    <text evidence="1">Catalyzes the formation of 5-methyl-uridine at position 1939 (m5U1939) in 23S rRNA.</text>
</comment>
<comment type="catalytic activity">
    <reaction evidence="1">
        <text>uridine(1939) in 23S rRNA + S-adenosyl-L-methionine = 5-methyluridine(1939) in 23S rRNA + S-adenosyl-L-homocysteine + H(+)</text>
        <dbReference type="Rhea" id="RHEA:42908"/>
        <dbReference type="Rhea" id="RHEA-COMP:10278"/>
        <dbReference type="Rhea" id="RHEA-COMP:10279"/>
        <dbReference type="ChEBI" id="CHEBI:15378"/>
        <dbReference type="ChEBI" id="CHEBI:57856"/>
        <dbReference type="ChEBI" id="CHEBI:59789"/>
        <dbReference type="ChEBI" id="CHEBI:65315"/>
        <dbReference type="ChEBI" id="CHEBI:74447"/>
        <dbReference type="EC" id="2.1.1.190"/>
    </reaction>
</comment>
<comment type="similarity">
    <text evidence="1">Belongs to the class I-like SAM-binding methyltransferase superfamily. RNA M5U methyltransferase family. RlmD subfamily.</text>
</comment>
<protein>
    <recommendedName>
        <fullName evidence="1">23S rRNA (uracil(1939)-C(5))-methyltransferase RlmD</fullName>
        <ecNumber evidence="1">2.1.1.190</ecNumber>
    </recommendedName>
    <alternativeName>
        <fullName evidence="1">23S rRNA(m5U1939)-methyltransferase</fullName>
    </alternativeName>
</protein>
<evidence type="ECO:0000255" key="1">
    <source>
        <dbReference type="HAMAP-Rule" id="MF_01010"/>
    </source>
</evidence>
<evidence type="ECO:0000256" key="2">
    <source>
        <dbReference type="SAM" id="MobiDB-lite"/>
    </source>
</evidence>
<dbReference type="EC" id="2.1.1.190" evidence="1"/>
<dbReference type="EMBL" id="FN869568">
    <property type="protein sequence ID" value="CBV42897.1"/>
    <property type="molecule type" value="Genomic_DNA"/>
</dbReference>
<dbReference type="RefSeq" id="WP_013332769.1">
    <property type="nucleotide sequence ID" value="NC_014532.2"/>
</dbReference>
<dbReference type="SMR" id="E1V4F9"/>
<dbReference type="STRING" id="768066.HELO_3013"/>
<dbReference type="GeneID" id="91010376"/>
<dbReference type="KEGG" id="hel:HELO_3013"/>
<dbReference type="eggNOG" id="COG2265">
    <property type="taxonomic scope" value="Bacteria"/>
</dbReference>
<dbReference type="HOGENOM" id="CLU_014689_8_2_6"/>
<dbReference type="OrthoDB" id="9804590at2"/>
<dbReference type="Proteomes" id="UP000008707">
    <property type="component" value="Chromosome"/>
</dbReference>
<dbReference type="GO" id="GO:0051539">
    <property type="term" value="F:4 iron, 4 sulfur cluster binding"/>
    <property type="evidence" value="ECO:0007669"/>
    <property type="project" value="UniProtKB-KW"/>
</dbReference>
<dbReference type="GO" id="GO:0005506">
    <property type="term" value="F:iron ion binding"/>
    <property type="evidence" value="ECO:0007669"/>
    <property type="project" value="UniProtKB-UniRule"/>
</dbReference>
<dbReference type="GO" id="GO:0003723">
    <property type="term" value="F:RNA binding"/>
    <property type="evidence" value="ECO:0007669"/>
    <property type="project" value="InterPro"/>
</dbReference>
<dbReference type="GO" id="GO:0070041">
    <property type="term" value="F:rRNA (uridine-C5-)-methyltransferase activity"/>
    <property type="evidence" value="ECO:0007669"/>
    <property type="project" value="UniProtKB-UniRule"/>
</dbReference>
<dbReference type="GO" id="GO:0070475">
    <property type="term" value="P:rRNA base methylation"/>
    <property type="evidence" value="ECO:0007669"/>
    <property type="project" value="TreeGrafter"/>
</dbReference>
<dbReference type="CDD" id="cd02440">
    <property type="entry name" value="AdoMet_MTases"/>
    <property type="match status" value="1"/>
</dbReference>
<dbReference type="FunFam" id="2.40.50.140:FF:000097">
    <property type="entry name" value="23S rRNA (uracil(1939)-C(5))-methyltransferase RlmD"/>
    <property type="match status" value="1"/>
</dbReference>
<dbReference type="Gene3D" id="2.40.50.1070">
    <property type="match status" value="1"/>
</dbReference>
<dbReference type="Gene3D" id="2.40.50.140">
    <property type="entry name" value="Nucleic acid-binding proteins"/>
    <property type="match status" value="1"/>
</dbReference>
<dbReference type="Gene3D" id="3.40.50.150">
    <property type="entry name" value="Vaccinia Virus protein VP39"/>
    <property type="match status" value="1"/>
</dbReference>
<dbReference type="HAMAP" id="MF_01010">
    <property type="entry name" value="23SrRNA_methyltr_RlmD"/>
    <property type="match status" value="1"/>
</dbReference>
<dbReference type="InterPro" id="IPR001566">
    <property type="entry name" value="23S_rRNA_MeTrfase_RlmD"/>
</dbReference>
<dbReference type="InterPro" id="IPR030390">
    <property type="entry name" value="MeTrfase_TrmA_AS"/>
</dbReference>
<dbReference type="InterPro" id="IPR012340">
    <property type="entry name" value="NA-bd_OB-fold"/>
</dbReference>
<dbReference type="InterPro" id="IPR029063">
    <property type="entry name" value="SAM-dependent_MTases_sf"/>
</dbReference>
<dbReference type="InterPro" id="IPR002792">
    <property type="entry name" value="TRAM_dom"/>
</dbReference>
<dbReference type="InterPro" id="IPR010280">
    <property type="entry name" value="U5_MeTrfase_fam"/>
</dbReference>
<dbReference type="PANTHER" id="PTHR11061:SF49">
    <property type="entry name" value="23S RRNA (URACIL(1939)-C(5))-METHYLTRANSFERASE RLMD"/>
    <property type="match status" value="1"/>
</dbReference>
<dbReference type="PANTHER" id="PTHR11061">
    <property type="entry name" value="RNA M5U METHYLTRANSFERASE"/>
    <property type="match status" value="1"/>
</dbReference>
<dbReference type="Pfam" id="PF01938">
    <property type="entry name" value="TRAM"/>
    <property type="match status" value="1"/>
</dbReference>
<dbReference type="Pfam" id="PF05958">
    <property type="entry name" value="tRNA_U5-meth_tr"/>
    <property type="match status" value="1"/>
</dbReference>
<dbReference type="SUPFAM" id="SSF50249">
    <property type="entry name" value="Nucleic acid-binding proteins"/>
    <property type="match status" value="1"/>
</dbReference>
<dbReference type="SUPFAM" id="SSF53335">
    <property type="entry name" value="S-adenosyl-L-methionine-dependent methyltransferases"/>
    <property type="match status" value="1"/>
</dbReference>
<dbReference type="PROSITE" id="PS51687">
    <property type="entry name" value="SAM_MT_RNA_M5U"/>
    <property type="match status" value="1"/>
</dbReference>
<dbReference type="PROSITE" id="PS50926">
    <property type="entry name" value="TRAM"/>
    <property type="match status" value="1"/>
</dbReference>
<dbReference type="PROSITE" id="PS01230">
    <property type="entry name" value="TRMA_1"/>
    <property type="match status" value="1"/>
</dbReference>
<proteinExistence type="inferred from homology"/>
<gene>
    <name evidence="1" type="primary">rlmD</name>
    <name type="synonym">rumA</name>
    <name type="ordered locus">HELO_3013</name>
</gene>